<evidence type="ECO:0000255" key="1">
    <source>
        <dbReference type="HAMAP-Rule" id="MF_00637"/>
    </source>
</evidence>
<reference key="1">
    <citation type="journal article" date="2002" name="Nucleic Acids Res.">
        <title>Genome sequence of Oceanobacillus iheyensis isolated from the Iheya Ridge and its unexpected adaptive capabilities to extreme environments.</title>
        <authorList>
            <person name="Takami H."/>
            <person name="Takaki Y."/>
            <person name="Uchiyama I."/>
        </authorList>
    </citation>
    <scope>NUCLEOTIDE SEQUENCE [LARGE SCALE GENOMIC DNA]</scope>
    <source>
        <strain>DSM 14371 / CIP 107618 / JCM 11309 / KCTC 3954 / HTE831</strain>
    </source>
</reference>
<protein>
    <recommendedName>
        <fullName evidence="1">Anti-sigma F factor</fullName>
        <ecNumber evidence="1">2.7.11.1</ecNumber>
    </recommendedName>
    <alternativeName>
        <fullName evidence="1">Stage II sporulation protein AB</fullName>
    </alternativeName>
</protein>
<feature type="chain" id="PRO_0000203566" description="Anti-sigma F factor">
    <location>
        <begin position="1"/>
        <end position="146"/>
    </location>
</feature>
<proteinExistence type="inferred from homology"/>
<gene>
    <name evidence="1" type="primary">spoIIAB</name>
    <name type="ordered locus">OB1840</name>
</gene>
<dbReference type="EC" id="2.7.11.1" evidence="1"/>
<dbReference type="EMBL" id="BA000028">
    <property type="protein sequence ID" value="BAC13796.1"/>
    <property type="molecule type" value="Genomic_DNA"/>
</dbReference>
<dbReference type="RefSeq" id="WP_011066236.1">
    <property type="nucleotide sequence ID" value="NC_004193.1"/>
</dbReference>
<dbReference type="SMR" id="Q8EQ73"/>
<dbReference type="STRING" id="221109.gene:10734080"/>
<dbReference type="KEGG" id="oih:OB1840"/>
<dbReference type="eggNOG" id="COG2172">
    <property type="taxonomic scope" value="Bacteria"/>
</dbReference>
<dbReference type="HOGENOM" id="CLU_090336_11_0_9"/>
<dbReference type="OrthoDB" id="9768808at2"/>
<dbReference type="PhylomeDB" id="Q8EQ73"/>
<dbReference type="Proteomes" id="UP000000822">
    <property type="component" value="Chromosome"/>
</dbReference>
<dbReference type="GO" id="GO:0005524">
    <property type="term" value="F:ATP binding"/>
    <property type="evidence" value="ECO:0007669"/>
    <property type="project" value="UniProtKB-KW"/>
</dbReference>
<dbReference type="GO" id="GO:0106310">
    <property type="term" value="F:protein serine kinase activity"/>
    <property type="evidence" value="ECO:0007669"/>
    <property type="project" value="RHEA"/>
</dbReference>
<dbReference type="GO" id="GO:0004674">
    <property type="term" value="F:protein serine/threonine kinase activity"/>
    <property type="evidence" value="ECO:0007669"/>
    <property type="project" value="UniProtKB-KW"/>
</dbReference>
<dbReference type="GO" id="GO:0016989">
    <property type="term" value="F:sigma factor antagonist activity"/>
    <property type="evidence" value="ECO:0007669"/>
    <property type="project" value="InterPro"/>
</dbReference>
<dbReference type="GO" id="GO:0030436">
    <property type="term" value="P:asexual sporulation"/>
    <property type="evidence" value="ECO:0007669"/>
    <property type="project" value="UniProtKB-UniRule"/>
</dbReference>
<dbReference type="GO" id="GO:0042174">
    <property type="term" value="P:negative regulation of sporulation resulting in formation of a cellular spore"/>
    <property type="evidence" value="ECO:0007669"/>
    <property type="project" value="InterPro"/>
</dbReference>
<dbReference type="GO" id="GO:0030435">
    <property type="term" value="P:sporulation resulting in formation of a cellular spore"/>
    <property type="evidence" value="ECO:0007669"/>
    <property type="project" value="UniProtKB-KW"/>
</dbReference>
<dbReference type="Gene3D" id="3.30.565.10">
    <property type="entry name" value="Histidine kinase-like ATPase, C-terminal domain"/>
    <property type="match status" value="1"/>
</dbReference>
<dbReference type="HAMAP" id="MF_00637">
    <property type="entry name" value="Anti_sigma_F"/>
    <property type="match status" value="1"/>
</dbReference>
<dbReference type="InterPro" id="IPR050267">
    <property type="entry name" value="Anti-sigma-factor_SerPK"/>
</dbReference>
<dbReference type="InterPro" id="IPR010194">
    <property type="entry name" value="Anti-sigma_F"/>
</dbReference>
<dbReference type="InterPro" id="IPR036890">
    <property type="entry name" value="HATPase_C_sf"/>
</dbReference>
<dbReference type="NCBIfam" id="TIGR01925">
    <property type="entry name" value="spIIAB"/>
    <property type="match status" value="1"/>
</dbReference>
<dbReference type="PANTHER" id="PTHR35526:SF3">
    <property type="entry name" value="ANTI-SIGMA-F FACTOR RSBW"/>
    <property type="match status" value="1"/>
</dbReference>
<dbReference type="PANTHER" id="PTHR35526">
    <property type="entry name" value="ANTI-SIGMA-F FACTOR RSBW-RELATED"/>
    <property type="match status" value="1"/>
</dbReference>
<dbReference type="Pfam" id="PF13581">
    <property type="entry name" value="HATPase_c_2"/>
    <property type="match status" value="1"/>
</dbReference>
<dbReference type="SMART" id="SM00387">
    <property type="entry name" value="HATPase_c"/>
    <property type="match status" value="1"/>
</dbReference>
<dbReference type="SUPFAM" id="SSF55874">
    <property type="entry name" value="ATPase domain of HSP90 chaperone/DNA topoisomerase II/histidine kinase"/>
    <property type="match status" value="1"/>
</dbReference>
<organism>
    <name type="scientific">Oceanobacillus iheyensis (strain DSM 14371 / CIP 107618 / JCM 11309 / KCTC 3954 / HTE831)</name>
    <dbReference type="NCBI Taxonomy" id="221109"/>
    <lineage>
        <taxon>Bacteria</taxon>
        <taxon>Bacillati</taxon>
        <taxon>Bacillota</taxon>
        <taxon>Bacilli</taxon>
        <taxon>Bacillales</taxon>
        <taxon>Bacillaceae</taxon>
        <taxon>Oceanobacillus</taxon>
    </lineage>
</organism>
<accession>Q8EQ73</accession>
<sequence length="146" mass="16364">MKNEMSLAFASVSENEAFARVAVASFITQLDPTMDELTEIKTVVSEAVTNSIIHGYHNEPHHKVYIECVLQDDEIEITIRDEGVGIKDIDEAREPLYTSKPELERSGMGFTIIENFMDSVEVISAPEKGTSVYMTKQLSKSKTVYN</sequence>
<name>SP2AB_OCEIH</name>
<comment type="function">
    <text evidence="1">Binds to sigma F and blocks its ability to form an RNA polymerase holoenzyme (E-sigma F). Phosphorylates SpoIIAA on a serine residue. This phosphorylation may enable SpoIIAA to act as an anti-anti-sigma factor that counteracts SpoIIAB and thus releases sigma F from inhibition.</text>
</comment>
<comment type="catalytic activity">
    <reaction evidence="1">
        <text>L-seryl-[protein] + ATP = O-phospho-L-seryl-[protein] + ADP + H(+)</text>
        <dbReference type="Rhea" id="RHEA:17989"/>
        <dbReference type="Rhea" id="RHEA-COMP:9863"/>
        <dbReference type="Rhea" id="RHEA-COMP:11604"/>
        <dbReference type="ChEBI" id="CHEBI:15378"/>
        <dbReference type="ChEBI" id="CHEBI:29999"/>
        <dbReference type="ChEBI" id="CHEBI:30616"/>
        <dbReference type="ChEBI" id="CHEBI:83421"/>
        <dbReference type="ChEBI" id="CHEBI:456216"/>
        <dbReference type="EC" id="2.7.11.1"/>
    </reaction>
</comment>
<comment type="catalytic activity">
    <reaction evidence="1">
        <text>L-threonyl-[protein] + ATP = O-phospho-L-threonyl-[protein] + ADP + H(+)</text>
        <dbReference type="Rhea" id="RHEA:46608"/>
        <dbReference type="Rhea" id="RHEA-COMP:11060"/>
        <dbReference type="Rhea" id="RHEA-COMP:11605"/>
        <dbReference type="ChEBI" id="CHEBI:15378"/>
        <dbReference type="ChEBI" id="CHEBI:30013"/>
        <dbReference type="ChEBI" id="CHEBI:30616"/>
        <dbReference type="ChEBI" id="CHEBI:61977"/>
        <dbReference type="ChEBI" id="CHEBI:456216"/>
        <dbReference type="EC" id="2.7.11.1"/>
    </reaction>
</comment>
<comment type="similarity">
    <text evidence="1">Belongs to the anti-sigma-factor family.</text>
</comment>
<keyword id="KW-0067">ATP-binding</keyword>
<keyword id="KW-0418">Kinase</keyword>
<keyword id="KW-0547">Nucleotide-binding</keyword>
<keyword id="KW-1185">Reference proteome</keyword>
<keyword id="KW-0723">Serine/threonine-protein kinase</keyword>
<keyword id="KW-0749">Sporulation</keyword>
<keyword id="KW-0808">Transferase</keyword>